<evidence type="ECO:0000255" key="1">
    <source>
        <dbReference type="HAMAP-Rule" id="MF_00086"/>
    </source>
</evidence>
<gene>
    <name evidence="1" type="primary">metK</name>
    <name type="ordered locus">DehaBAV1_0488</name>
</gene>
<protein>
    <recommendedName>
        <fullName evidence="1">S-adenosylmethionine synthase</fullName>
        <shortName evidence="1">AdoMet synthase</shortName>
        <ecNumber evidence="1">2.5.1.6</ecNumber>
    </recommendedName>
    <alternativeName>
        <fullName evidence="1">MAT</fullName>
    </alternativeName>
    <alternativeName>
        <fullName evidence="1">Methionine adenosyltransferase</fullName>
    </alternativeName>
</protein>
<name>METK_DEHMB</name>
<feature type="chain" id="PRO_1000075372" description="S-adenosylmethionine synthase">
    <location>
        <begin position="1"/>
        <end position="406"/>
    </location>
</feature>
<feature type="region of interest" description="Flexible loop" evidence="1">
    <location>
        <begin position="106"/>
        <end position="116"/>
    </location>
</feature>
<feature type="binding site" description="in other chain" evidence="1">
    <location>
        <position position="22"/>
    </location>
    <ligand>
        <name>ATP</name>
        <dbReference type="ChEBI" id="CHEBI:30616"/>
        <note>ligand shared between two neighboring subunits</note>
    </ligand>
</feature>
<feature type="binding site" evidence="1">
    <location>
        <position position="24"/>
    </location>
    <ligand>
        <name>Mg(2+)</name>
        <dbReference type="ChEBI" id="CHEBI:18420"/>
    </ligand>
</feature>
<feature type="binding site" evidence="1">
    <location>
        <position position="50"/>
    </location>
    <ligand>
        <name>K(+)</name>
        <dbReference type="ChEBI" id="CHEBI:29103"/>
    </ligand>
</feature>
<feature type="binding site" description="in other chain" evidence="1">
    <location>
        <position position="63"/>
    </location>
    <ligand>
        <name>L-methionine</name>
        <dbReference type="ChEBI" id="CHEBI:57844"/>
        <note>ligand shared between two neighboring subunits</note>
    </ligand>
</feature>
<feature type="binding site" description="in other chain" evidence="1">
    <location>
        <position position="106"/>
    </location>
    <ligand>
        <name>L-methionine</name>
        <dbReference type="ChEBI" id="CHEBI:57844"/>
        <note>ligand shared between two neighboring subunits</note>
    </ligand>
</feature>
<feature type="binding site" description="in other chain" evidence="1">
    <location>
        <begin position="180"/>
        <end position="182"/>
    </location>
    <ligand>
        <name>ATP</name>
        <dbReference type="ChEBI" id="CHEBI:30616"/>
        <note>ligand shared between two neighboring subunits</note>
    </ligand>
</feature>
<feature type="binding site" description="in other chain" evidence="1">
    <location>
        <begin position="246"/>
        <end position="247"/>
    </location>
    <ligand>
        <name>ATP</name>
        <dbReference type="ChEBI" id="CHEBI:30616"/>
        <note>ligand shared between two neighboring subunits</note>
    </ligand>
</feature>
<feature type="binding site" evidence="1">
    <location>
        <position position="255"/>
    </location>
    <ligand>
        <name>ATP</name>
        <dbReference type="ChEBI" id="CHEBI:30616"/>
        <note>ligand shared between two neighboring subunits</note>
    </ligand>
</feature>
<feature type="binding site" evidence="1">
    <location>
        <position position="255"/>
    </location>
    <ligand>
        <name>L-methionine</name>
        <dbReference type="ChEBI" id="CHEBI:57844"/>
        <note>ligand shared between two neighboring subunits</note>
    </ligand>
</feature>
<feature type="binding site" description="in other chain" evidence="1">
    <location>
        <begin position="261"/>
        <end position="262"/>
    </location>
    <ligand>
        <name>ATP</name>
        <dbReference type="ChEBI" id="CHEBI:30616"/>
        <note>ligand shared between two neighboring subunits</note>
    </ligand>
</feature>
<feature type="binding site" evidence="1">
    <location>
        <position position="278"/>
    </location>
    <ligand>
        <name>ATP</name>
        <dbReference type="ChEBI" id="CHEBI:30616"/>
        <note>ligand shared between two neighboring subunits</note>
    </ligand>
</feature>
<feature type="binding site" evidence="1">
    <location>
        <position position="282"/>
    </location>
    <ligand>
        <name>ATP</name>
        <dbReference type="ChEBI" id="CHEBI:30616"/>
        <note>ligand shared between two neighboring subunits</note>
    </ligand>
</feature>
<feature type="binding site" description="in other chain" evidence="1">
    <location>
        <position position="286"/>
    </location>
    <ligand>
        <name>L-methionine</name>
        <dbReference type="ChEBI" id="CHEBI:57844"/>
        <note>ligand shared between two neighboring subunits</note>
    </ligand>
</feature>
<proteinExistence type="inferred from homology"/>
<accession>A5FRV2</accession>
<comment type="function">
    <text evidence="1">Catalyzes the formation of S-adenosylmethionine (AdoMet) from methionine and ATP. The overall synthetic reaction is composed of two sequential steps, AdoMet formation and the subsequent tripolyphosphate hydrolysis which occurs prior to release of AdoMet from the enzyme.</text>
</comment>
<comment type="catalytic activity">
    <reaction evidence="1">
        <text>L-methionine + ATP + H2O = S-adenosyl-L-methionine + phosphate + diphosphate</text>
        <dbReference type="Rhea" id="RHEA:21080"/>
        <dbReference type="ChEBI" id="CHEBI:15377"/>
        <dbReference type="ChEBI" id="CHEBI:30616"/>
        <dbReference type="ChEBI" id="CHEBI:33019"/>
        <dbReference type="ChEBI" id="CHEBI:43474"/>
        <dbReference type="ChEBI" id="CHEBI:57844"/>
        <dbReference type="ChEBI" id="CHEBI:59789"/>
        <dbReference type="EC" id="2.5.1.6"/>
    </reaction>
</comment>
<comment type="cofactor">
    <cofactor evidence="1">
        <name>Mg(2+)</name>
        <dbReference type="ChEBI" id="CHEBI:18420"/>
    </cofactor>
    <text evidence="1">Binds 2 divalent ions per subunit.</text>
</comment>
<comment type="cofactor">
    <cofactor evidence="1">
        <name>K(+)</name>
        <dbReference type="ChEBI" id="CHEBI:29103"/>
    </cofactor>
    <text evidence="1">Binds 1 potassium ion per subunit.</text>
</comment>
<comment type="pathway">
    <text evidence="1">Amino-acid biosynthesis; S-adenosyl-L-methionine biosynthesis; S-adenosyl-L-methionine from L-methionine: step 1/1.</text>
</comment>
<comment type="subunit">
    <text evidence="1">Homotetramer; dimer of dimers.</text>
</comment>
<comment type="subcellular location">
    <subcellularLocation>
        <location evidence="1">Cytoplasm</location>
    </subcellularLocation>
</comment>
<comment type="similarity">
    <text evidence="1">Belongs to the AdoMet synthase family.</text>
</comment>
<dbReference type="EC" id="2.5.1.6" evidence="1"/>
<dbReference type="EMBL" id="CP000688">
    <property type="protein sequence ID" value="ABQ17073.1"/>
    <property type="molecule type" value="Genomic_DNA"/>
</dbReference>
<dbReference type="SMR" id="A5FRV2"/>
<dbReference type="KEGG" id="deb:DehaBAV1_0488"/>
<dbReference type="PATRIC" id="fig|216389.18.peg.532"/>
<dbReference type="HOGENOM" id="CLU_041802_1_1_0"/>
<dbReference type="UniPathway" id="UPA00315">
    <property type="reaction ID" value="UER00080"/>
</dbReference>
<dbReference type="GO" id="GO:0005737">
    <property type="term" value="C:cytoplasm"/>
    <property type="evidence" value="ECO:0007669"/>
    <property type="project" value="UniProtKB-SubCell"/>
</dbReference>
<dbReference type="GO" id="GO:0005524">
    <property type="term" value="F:ATP binding"/>
    <property type="evidence" value="ECO:0007669"/>
    <property type="project" value="UniProtKB-UniRule"/>
</dbReference>
<dbReference type="GO" id="GO:0000287">
    <property type="term" value="F:magnesium ion binding"/>
    <property type="evidence" value="ECO:0007669"/>
    <property type="project" value="UniProtKB-UniRule"/>
</dbReference>
<dbReference type="GO" id="GO:0004478">
    <property type="term" value="F:methionine adenosyltransferase activity"/>
    <property type="evidence" value="ECO:0007669"/>
    <property type="project" value="UniProtKB-UniRule"/>
</dbReference>
<dbReference type="GO" id="GO:0006730">
    <property type="term" value="P:one-carbon metabolic process"/>
    <property type="evidence" value="ECO:0007669"/>
    <property type="project" value="UniProtKB-KW"/>
</dbReference>
<dbReference type="GO" id="GO:0006556">
    <property type="term" value="P:S-adenosylmethionine biosynthetic process"/>
    <property type="evidence" value="ECO:0007669"/>
    <property type="project" value="UniProtKB-UniRule"/>
</dbReference>
<dbReference type="CDD" id="cd18079">
    <property type="entry name" value="S-AdoMet_synt"/>
    <property type="match status" value="1"/>
</dbReference>
<dbReference type="FunFam" id="3.30.300.10:FF:000003">
    <property type="entry name" value="S-adenosylmethionine synthase"/>
    <property type="match status" value="1"/>
</dbReference>
<dbReference type="Gene3D" id="3.30.300.10">
    <property type="match status" value="3"/>
</dbReference>
<dbReference type="HAMAP" id="MF_00086">
    <property type="entry name" value="S_AdoMet_synth1"/>
    <property type="match status" value="1"/>
</dbReference>
<dbReference type="InterPro" id="IPR022631">
    <property type="entry name" value="ADOMET_SYNTHASE_CS"/>
</dbReference>
<dbReference type="InterPro" id="IPR022630">
    <property type="entry name" value="S-AdoMet_synt_C"/>
</dbReference>
<dbReference type="InterPro" id="IPR022629">
    <property type="entry name" value="S-AdoMet_synt_central"/>
</dbReference>
<dbReference type="InterPro" id="IPR022628">
    <property type="entry name" value="S-AdoMet_synt_N"/>
</dbReference>
<dbReference type="InterPro" id="IPR002133">
    <property type="entry name" value="S-AdoMet_synthetase"/>
</dbReference>
<dbReference type="InterPro" id="IPR022636">
    <property type="entry name" value="S-AdoMet_synthetase_sfam"/>
</dbReference>
<dbReference type="NCBIfam" id="TIGR01034">
    <property type="entry name" value="metK"/>
    <property type="match status" value="1"/>
</dbReference>
<dbReference type="PANTHER" id="PTHR11964">
    <property type="entry name" value="S-ADENOSYLMETHIONINE SYNTHETASE"/>
    <property type="match status" value="1"/>
</dbReference>
<dbReference type="Pfam" id="PF02773">
    <property type="entry name" value="S-AdoMet_synt_C"/>
    <property type="match status" value="1"/>
</dbReference>
<dbReference type="Pfam" id="PF02772">
    <property type="entry name" value="S-AdoMet_synt_M"/>
    <property type="match status" value="1"/>
</dbReference>
<dbReference type="Pfam" id="PF00438">
    <property type="entry name" value="S-AdoMet_synt_N"/>
    <property type="match status" value="1"/>
</dbReference>
<dbReference type="PIRSF" id="PIRSF000497">
    <property type="entry name" value="MAT"/>
    <property type="match status" value="1"/>
</dbReference>
<dbReference type="SUPFAM" id="SSF55973">
    <property type="entry name" value="S-adenosylmethionine synthetase"/>
    <property type="match status" value="3"/>
</dbReference>
<dbReference type="PROSITE" id="PS00376">
    <property type="entry name" value="ADOMET_SYNTHASE_1"/>
    <property type="match status" value="1"/>
</dbReference>
<dbReference type="PROSITE" id="PS00377">
    <property type="entry name" value="ADOMET_SYNTHASE_2"/>
    <property type="match status" value="1"/>
</dbReference>
<organism>
    <name type="scientific">Dehalococcoides mccartyi (strain ATCC BAA-2100 / JCM 16839 / KCTC 5957 / BAV1)</name>
    <dbReference type="NCBI Taxonomy" id="216389"/>
    <lineage>
        <taxon>Bacteria</taxon>
        <taxon>Bacillati</taxon>
        <taxon>Chloroflexota</taxon>
        <taxon>Dehalococcoidia</taxon>
        <taxon>Dehalococcoidales</taxon>
        <taxon>Dehalococcoidaceae</taxon>
        <taxon>Dehalococcoides</taxon>
    </lineage>
</organism>
<keyword id="KW-0067">ATP-binding</keyword>
<keyword id="KW-0963">Cytoplasm</keyword>
<keyword id="KW-0460">Magnesium</keyword>
<keyword id="KW-0479">Metal-binding</keyword>
<keyword id="KW-0547">Nucleotide-binding</keyword>
<keyword id="KW-0554">One-carbon metabolism</keyword>
<keyword id="KW-0630">Potassium</keyword>
<keyword id="KW-0808">Transferase</keyword>
<sequence>MSQTFGNSSKYLFTSESVTEGHPDKICDQISDAVLDAIIAKDPTAHVACETAVTNGLVVVMGEITTSCYVEIPELVRGVIKDIGYIKPEYGFDDRTCGVLTSINRQSPDIALGVNKSQEAKSGQVDELDLTGAGDQGMMFGYACTETPEYMPLPISLAHRLSKRLAEVRKNGTLPYLRPDGKSQVTVEYHNGKAKRISSVVIGAQHDPDITTEKIQADIIRNVIKPIIPTNLLDENTEYYVNATGRFVVGGPVSDTGFTGRKILVDTYGGFARHGGGAFSGKDPTKVDRSACYMARYIAKNLVAAGLADRLEIQVAYVIGVAHPLSVSIETFNTARMNHEDILSIIQKHFDLRPEAIIRNLGLRRPIYRQTAAYGHLGRPELDLPWERLDKVDAIKATIESLSVSK</sequence>
<reference key="1">
    <citation type="submission" date="2007-05" db="EMBL/GenBank/DDBJ databases">
        <title>Complete sequence of Dehalococcoides sp. BAV1.</title>
        <authorList>
            <consortium name="US DOE Joint Genome Institute"/>
            <person name="Copeland A."/>
            <person name="Lucas S."/>
            <person name="Lapidus A."/>
            <person name="Barry K."/>
            <person name="Detter J.C."/>
            <person name="Glavina del Rio T."/>
            <person name="Hammon N."/>
            <person name="Israni S."/>
            <person name="Pitluck S."/>
            <person name="Lowry S."/>
            <person name="Clum A."/>
            <person name="Schmutz J."/>
            <person name="Larimer F."/>
            <person name="Land M."/>
            <person name="Hauser L."/>
            <person name="Kyrpides N."/>
            <person name="Kim E."/>
            <person name="Ritalahti K.M."/>
            <person name="Loeffler F."/>
            <person name="Richardson P."/>
        </authorList>
    </citation>
    <scope>NUCLEOTIDE SEQUENCE [LARGE SCALE GENOMIC DNA]</scope>
    <source>
        <strain>ATCC BAA-2100 / JCM 16839 / KCTC 5957 / BAV1</strain>
    </source>
</reference>